<feature type="propeptide" id="PRO_0000397376" description="Removed in mature form; by autocatalysis" evidence="1">
    <location>
        <begin position="1"/>
        <end position="9"/>
    </location>
</feature>
<feature type="chain" id="PRO_0000397377" description="Proteasome subunit beta">
    <location>
        <begin position="10"/>
        <end position="211"/>
    </location>
</feature>
<feature type="active site" description="Nucleophile" evidence="1">
    <location>
        <position position="10"/>
    </location>
</feature>
<sequence>MSEAETLKGTTTIGIVFKDGIILATEKRATMGSMIASKRAKKVYQVADRIGMTTAGGVGDAQQLARIMSVECNLYQIRRGRSISVGASSTLLSNYLNQNRGYPYYVQLLVGGVDATGPSVYSVDAMGGATRESDIVATGSGSPMAYGVLEDRYKKDLTEDEAIELAIRALRAAMRRDSASGEGIHVVIITKDAYSELSEERLEQYTAAVTA</sequence>
<reference key="1">
    <citation type="journal article" date="2015" name="Genome Announc.">
        <title>Complete Genome Sequence of Methanosphaerula palustris E1-9CT, a Hydrogenotrophic Methanogen Isolated from a Minerotrophic Fen Peatland.</title>
        <authorList>
            <person name="Cadillo-Quiroz H."/>
            <person name="Browne P."/>
            <person name="Kyrpides N."/>
            <person name="Woyke T."/>
            <person name="Goodwin L."/>
            <person name="Detter C."/>
            <person name="Yavitt J.B."/>
            <person name="Zinder S.H."/>
        </authorList>
    </citation>
    <scope>NUCLEOTIDE SEQUENCE [LARGE SCALE GENOMIC DNA]</scope>
    <source>
        <strain>ATCC BAA-1556 / DSM 19958 / E1-9c</strain>
    </source>
</reference>
<evidence type="ECO:0000255" key="1">
    <source>
        <dbReference type="HAMAP-Rule" id="MF_02113"/>
    </source>
</evidence>
<name>PSB_METPE</name>
<protein>
    <recommendedName>
        <fullName evidence="1">Proteasome subunit beta</fullName>
        <ecNumber evidence="1">3.4.25.1</ecNumber>
    </recommendedName>
    <alternativeName>
        <fullName evidence="1">20S proteasome beta subunit</fullName>
    </alternativeName>
    <alternativeName>
        <fullName evidence="1">Proteasome core protein PsmB</fullName>
    </alternativeName>
</protein>
<gene>
    <name evidence="1" type="primary">psmB</name>
    <name type="ordered locus">Mpal_0778</name>
</gene>
<dbReference type="EC" id="3.4.25.1" evidence="1"/>
<dbReference type="EMBL" id="CP001338">
    <property type="protein sequence ID" value="ACL16140.1"/>
    <property type="molecule type" value="Genomic_DNA"/>
</dbReference>
<dbReference type="RefSeq" id="WP_012617459.1">
    <property type="nucleotide sequence ID" value="NC_011832.1"/>
</dbReference>
<dbReference type="SMR" id="B8GG66"/>
<dbReference type="STRING" id="521011.Mpal_0778"/>
<dbReference type="MEROPS" id="T01.002"/>
<dbReference type="GeneID" id="7270519"/>
<dbReference type="KEGG" id="mpl:Mpal_0778"/>
<dbReference type="eggNOG" id="arCOG00970">
    <property type="taxonomic scope" value="Archaea"/>
</dbReference>
<dbReference type="HOGENOM" id="CLU_035750_7_2_2"/>
<dbReference type="OrthoDB" id="6330at2157"/>
<dbReference type="Proteomes" id="UP000002457">
    <property type="component" value="Chromosome"/>
</dbReference>
<dbReference type="GO" id="GO:0005737">
    <property type="term" value="C:cytoplasm"/>
    <property type="evidence" value="ECO:0007669"/>
    <property type="project" value="UniProtKB-SubCell"/>
</dbReference>
<dbReference type="GO" id="GO:0019774">
    <property type="term" value="C:proteasome core complex, beta-subunit complex"/>
    <property type="evidence" value="ECO:0007669"/>
    <property type="project" value="UniProtKB-UniRule"/>
</dbReference>
<dbReference type="GO" id="GO:0004298">
    <property type="term" value="F:threonine-type endopeptidase activity"/>
    <property type="evidence" value="ECO:0007669"/>
    <property type="project" value="UniProtKB-UniRule"/>
</dbReference>
<dbReference type="GO" id="GO:0010498">
    <property type="term" value="P:proteasomal protein catabolic process"/>
    <property type="evidence" value="ECO:0007669"/>
    <property type="project" value="UniProtKB-UniRule"/>
</dbReference>
<dbReference type="CDD" id="cd03764">
    <property type="entry name" value="proteasome_beta_archeal"/>
    <property type="match status" value="1"/>
</dbReference>
<dbReference type="FunFam" id="3.60.20.10:FF:000049">
    <property type="entry name" value="Proteasome subunit beta"/>
    <property type="match status" value="1"/>
</dbReference>
<dbReference type="Gene3D" id="3.60.20.10">
    <property type="entry name" value="Glutamine Phosphoribosylpyrophosphate, subunit 1, domain 1"/>
    <property type="match status" value="1"/>
</dbReference>
<dbReference type="HAMAP" id="MF_02113_A">
    <property type="entry name" value="Proteasome_B_A"/>
    <property type="match status" value="1"/>
</dbReference>
<dbReference type="InterPro" id="IPR029055">
    <property type="entry name" value="Ntn_hydrolases_N"/>
</dbReference>
<dbReference type="InterPro" id="IPR019983">
    <property type="entry name" value="Pept_T1A_Psome_bsu_arc"/>
</dbReference>
<dbReference type="InterPro" id="IPR000243">
    <property type="entry name" value="Pept_T1A_subB"/>
</dbReference>
<dbReference type="InterPro" id="IPR016050">
    <property type="entry name" value="Proteasome_bsu_CS"/>
</dbReference>
<dbReference type="InterPro" id="IPR001353">
    <property type="entry name" value="Proteasome_sua/b"/>
</dbReference>
<dbReference type="InterPro" id="IPR023333">
    <property type="entry name" value="Proteasome_suB-type"/>
</dbReference>
<dbReference type="NCBIfam" id="TIGR03634">
    <property type="entry name" value="arc_protsome_B"/>
    <property type="match status" value="1"/>
</dbReference>
<dbReference type="PANTHER" id="PTHR32194">
    <property type="entry name" value="METALLOPROTEASE TLDD"/>
    <property type="match status" value="1"/>
</dbReference>
<dbReference type="PANTHER" id="PTHR32194:SF3">
    <property type="entry name" value="PROTEASOME SUBUNIT BETA"/>
    <property type="match status" value="1"/>
</dbReference>
<dbReference type="Pfam" id="PF00227">
    <property type="entry name" value="Proteasome"/>
    <property type="match status" value="1"/>
</dbReference>
<dbReference type="PRINTS" id="PR00141">
    <property type="entry name" value="PROTEASOME"/>
</dbReference>
<dbReference type="SUPFAM" id="SSF56235">
    <property type="entry name" value="N-terminal nucleophile aminohydrolases (Ntn hydrolases)"/>
    <property type="match status" value="1"/>
</dbReference>
<dbReference type="PROSITE" id="PS00854">
    <property type="entry name" value="PROTEASOME_BETA_1"/>
    <property type="match status" value="1"/>
</dbReference>
<dbReference type="PROSITE" id="PS51476">
    <property type="entry name" value="PROTEASOME_BETA_2"/>
    <property type="match status" value="1"/>
</dbReference>
<comment type="function">
    <text evidence="1">Component of the proteasome core, a large protease complex with broad specificity involved in protein degradation.</text>
</comment>
<comment type="catalytic activity">
    <reaction evidence="1">
        <text>Cleavage of peptide bonds with very broad specificity.</text>
        <dbReference type="EC" id="3.4.25.1"/>
    </reaction>
</comment>
<comment type="activity regulation">
    <text evidence="1">The formation of the proteasomal ATPase PAN-20S proteasome complex, via the docking of the C-termini of PAN into the intersubunit pockets in the alpha-rings, triggers opening of the gate for substrate entry. Interconversion between the open-gate and close-gate conformations leads to a dynamic regulation of the 20S proteasome proteolysis activity.</text>
</comment>
<comment type="subunit">
    <text evidence="1">The 20S proteasome core is composed of 14 alpha and 14 beta subunits that assemble into four stacked heptameric rings, resulting in a barrel-shaped structure. The two inner rings, each composed of seven catalytic beta subunits, are sandwiched by two outer rings, each composed of seven alpha subunits. The catalytic chamber with the active sites is on the inside of the barrel. Has a gated structure, the ends of the cylinder being occluded by the N-termini of the alpha-subunits. Is capped at one or both ends by the proteasome regulatory ATPase, PAN.</text>
</comment>
<comment type="subcellular location">
    <subcellularLocation>
        <location evidence="1">Cytoplasm</location>
    </subcellularLocation>
</comment>
<comment type="similarity">
    <text evidence="1">Belongs to the peptidase T1B family.</text>
</comment>
<organism>
    <name type="scientific">Methanosphaerula palustris (strain ATCC BAA-1556 / DSM 19958 / E1-9c)</name>
    <dbReference type="NCBI Taxonomy" id="521011"/>
    <lineage>
        <taxon>Archaea</taxon>
        <taxon>Methanobacteriati</taxon>
        <taxon>Methanobacteriota</taxon>
        <taxon>Stenosarchaea group</taxon>
        <taxon>Methanomicrobia</taxon>
        <taxon>Methanomicrobiales</taxon>
        <taxon>Methanoregulaceae</taxon>
        <taxon>Methanosphaerula</taxon>
    </lineage>
</organism>
<proteinExistence type="inferred from homology"/>
<accession>B8GG66</accession>
<keyword id="KW-0068">Autocatalytic cleavage</keyword>
<keyword id="KW-0963">Cytoplasm</keyword>
<keyword id="KW-0378">Hydrolase</keyword>
<keyword id="KW-0645">Protease</keyword>
<keyword id="KW-0647">Proteasome</keyword>
<keyword id="KW-1185">Reference proteome</keyword>
<keyword id="KW-0888">Threonine protease</keyword>
<keyword id="KW-0865">Zymogen</keyword>